<name>HUP1_PARKE</name>
<keyword id="KW-0472">Membrane</keyword>
<keyword id="KW-0762">Sugar transport</keyword>
<keyword id="KW-0769">Symport</keyword>
<keyword id="KW-0812">Transmembrane</keyword>
<keyword id="KW-1133">Transmembrane helix</keyword>
<keyword id="KW-0813">Transport</keyword>
<organism>
    <name type="scientific">Parachlorella kessleri</name>
    <name type="common">Green alga</name>
    <name type="synonym">Chlorella kessleri</name>
    <dbReference type="NCBI Taxonomy" id="3074"/>
    <lineage>
        <taxon>Eukaryota</taxon>
        <taxon>Viridiplantae</taxon>
        <taxon>Chlorophyta</taxon>
        <taxon>core chlorophytes</taxon>
        <taxon>Trebouxiophyceae</taxon>
        <taxon>Chlorellales</taxon>
        <taxon>Chlorellaceae</taxon>
        <taxon>Parachlorella</taxon>
    </lineage>
</organism>
<protein>
    <recommendedName>
        <fullName>H(+)/hexose cotransporter 1</fullName>
    </recommendedName>
</protein>
<feature type="chain" id="PRO_0000050428" description="H(+)/hexose cotransporter 1">
    <location>
        <begin position="1"/>
        <end position="534"/>
    </location>
</feature>
<feature type="topological domain" description="Cytoplasmic" evidence="1">
    <location>
        <begin position="1"/>
        <end position="21"/>
    </location>
</feature>
<feature type="transmembrane region" description="Helical; Name=1" evidence="1">
    <location>
        <begin position="22"/>
        <end position="42"/>
    </location>
</feature>
<feature type="topological domain" description="Extracellular" evidence="1">
    <location>
        <begin position="43"/>
        <end position="87"/>
    </location>
</feature>
<feature type="transmembrane region" description="Helical; Name=2" evidence="1">
    <location>
        <begin position="88"/>
        <end position="108"/>
    </location>
</feature>
<feature type="topological domain" description="Cytoplasmic" evidence="1">
    <location>
        <begin position="109"/>
        <end position="114"/>
    </location>
</feature>
<feature type="transmembrane region" description="Helical; Name=3" evidence="1">
    <location>
        <begin position="115"/>
        <end position="135"/>
    </location>
</feature>
<feature type="topological domain" description="Extracellular" evidence="1">
    <location>
        <begin position="136"/>
        <end position="144"/>
    </location>
</feature>
<feature type="transmembrane region" description="Helical; Name=4" evidence="1">
    <location>
        <begin position="145"/>
        <end position="165"/>
    </location>
</feature>
<feature type="topological domain" description="Cytoplasmic" evidence="1">
    <location>
        <begin position="166"/>
        <end position="173"/>
    </location>
</feature>
<feature type="transmembrane region" description="Helical; Name=5" evidence="1">
    <location>
        <begin position="174"/>
        <end position="194"/>
    </location>
</feature>
<feature type="topological domain" description="Extracellular" evidence="1">
    <location>
        <begin position="195"/>
        <end position="204"/>
    </location>
</feature>
<feature type="transmembrane region" description="Helical; Name=6" evidence="1">
    <location>
        <begin position="205"/>
        <end position="225"/>
    </location>
</feature>
<feature type="topological domain" description="Cytoplasmic" evidence="1">
    <location>
        <begin position="226"/>
        <end position="299"/>
    </location>
</feature>
<feature type="transmembrane region" description="Helical; Name=7" evidence="1">
    <location>
        <begin position="300"/>
        <end position="322"/>
    </location>
</feature>
<feature type="topological domain" description="Extracellular" evidence="1">
    <location>
        <begin position="323"/>
        <end position="328"/>
    </location>
</feature>
<feature type="transmembrane region" description="Helical; Name=8" evidence="1">
    <location>
        <begin position="329"/>
        <end position="349"/>
    </location>
</feature>
<feature type="topological domain" description="Cytoplasmic" evidence="1">
    <location>
        <begin position="350"/>
        <end position="352"/>
    </location>
</feature>
<feature type="transmembrane region" description="Helical; Name=9" evidence="1">
    <location>
        <begin position="353"/>
        <end position="373"/>
    </location>
</feature>
<feature type="topological domain" description="Extracellular" evidence="1">
    <location>
        <begin position="374"/>
        <end position="387"/>
    </location>
</feature>
<feature type="transmembrane region" description="Helical; Name=10" evidence="1">
    <location>
        <begin position="388"/>
        <end position="408"/>
    </location>
</feature>
<feature type="topological domain" description="Cytoplasmic" evidence="1">
    <location>
        <begin position="409"/>
        <end position="433"/>
    </location>
</feature>
<feature type="transmembrane region" description="Helical; Name=11" evidence="1">
    <location>
        <begin position="434"/>
        <end position="454"/>
    </location>
</feature>
<feature type="topological domain" description="Extracellular" evidence="1">
    <location>
        <begin position="455"/>
        <end position="456"/>
    </location>
</feature>
<feature type="transmembrane region" description="Helical; Name=12" evidence="1">
    <location>
        <begin position="457"/>
        <end position="477"/>
    </location>
</feature>
<feature type="topological domain" description="Cytoplasmic" evidence="1">
    <location>
        <begin position="478"/>
        <end position="534"/>
    </location>
</feature>
<feature type="sequence conflict" description="In Ref. 1; CAA68813." evidence="2" ref="1">
    <location>
        <position position="60"/>
    </location>
</feature>
<feature type="sequence conflict" description="In Ref. 1; CAA68813." evidence="2" ref="1">
    <original>P</original>
    <variation>L</variation>
    <location>
        <position position="209"/>
    </location>
</feature>
<feature type="sequence conflict" description="In Ref. 1; CAA68813." evidence="2" ref="1">
    <original>C</original>
    <variation>R</variation>
    <location>
        <position position="248"/>
    </location>
</feature>
<sequence length="534" mass="57523">MAGGGVVVVSGRGLSTGDYRGGLTVYVVMVAFMAACGGLLLGYDNGVTGGVVSLEAFEKKFFPDVWAKKQEVHEDSPYCTYDNAKLQLFVSSLFLAGLVSCLFASWITRNWGRKVTMGIGGAFFVAGGLVNAFAQDMAMLIVGRVLLGFGVGLGSQVVPQYLSEVAPFSHRGMLNIGYQLFVTIGILIAGLVNYAVRDWENGWRLSLGPAAAPGAILFLGSLVLPESPNFLVEKGKTEKGREVLQKLCGTSEVDAEFADIVAAVEIARPITMRQSWASLFTRRYMPQLLTSFVIQFFQQFTGINAIIFYVPVLFSSLGSANSAALLNTVVVGAVNVGSTLIAVMFSDKFGRRFLLIEGGIQCCLAMLTTGVVLAIEFAKYGTDPLPKAVASGILAVICIFISGFAWSWGPMGWLIPSEIFTLETRPAGTAVAVVGNFLFSFVIGQAFVSMLCAMEYGVFLFFAGWLVIMVLCAIFLLPETKGVPIERVQALYARHWFWNRVMGPAAAEVIAEDEKRVAAASAIIKEEELSKAMK</sequence>
<reference key="1">
    <citation type="journal article" date="1989" name="FEBS Lett.">
        <title>The hexose carrier from Chlorella. cDNA cloning of a eucaryotic H+-cotransporter.</title>
        <authorList>
            <person name="Sauer N."/>
            <person name="Tanner W."/>
        </authorList>
    </citation>
    <scope>NUCLEOTIDE SEQUENCE [MRNA]</scope>
</reference>
<reference key="2">
    <citation type="journal article" date="1991" name="Curr. Genet.">
        <title>The Chlorella H+/hexose cotransporter gene.</title>
        <authorList>
            <person name="Wolf K."/>
            <person name="Tanner W."/>
            <person name="Sauer N."/>
        </authorList>
    </citation>
    <scope>NUCLEOTIDE SEQUENCE</scope>
</reference>
<proteinExistence type="evidence at transcript level"/>
<comment type="function">
    <text>Active uptake of hexoses.</text>
</comment>
<comment type="subcellular location">
    <subcellularLocation>
        <location>Membrane</location>
        <topology>Multi-pass membrane protein</topology>
    </subcellularLocation>
</comment>
<comment type="induction">
    <text>By glucose.</text>
</comment>
<comment type="similarity">
    <text evidence="2">Belongs to the major facilitator superfamily. Sugar transporter (TC 2.A.1.1) family.</text>
</comment>
<accession>P15686</accession>
<accession>Q39523</accession>
<dbReference type="EMBL" id="Y07520">
    <property type="protein sequence ID" value="CAA68813.1"/>
    <property type="molecule type" value="mRNA"/>
</dbReference>
<dbReference type="EMBL" id="X55349">
    <property type="protein sequence ID" value="CAA39036.1"/>
    <property type="molecule type" value="Genomic_DNA"/>
</dbReference>
<dbReference type="PIR" id="S14144">
    <property type="entry name" value="S14144"/>
</dbReference>
<dbReference type="SMR" id="P15686"/>
<dbReference type="TCDB" id="2.A.1.1.14">
    <property type="family name" value="the major facilitator superfamily (mfs)"/>
</dbReference>
<dbReference type="GO" id="GO:0016020">
    <property type="term" value="C:membrane"/>
    <property type="evidence" value="ECO:0007669"/>
    <property type="project" value="UniProtKB-SubCell"/>
</dbReference>
<dbReference type="GO" id="GO:0015145">
    <property type="term" value="F:monosaccharide transmembrane transporter activity"/>
    <property type="evidence" value="ECO:0007669"/>
    <property type="project" value="InterPro"/>
</dbReference>
<dbReference type="GO" id="GO:0015293">
    <property type="term" value="F:symporter activity"/>
    <property type="evidence" value="ECO:0007669"/>
    <property type="project" value="UniProtKB-KW"/>
</dbReference>
<dbReference type="CDD" id="cd17361">
    <property type="entry name" value="MFS_STP"/>
    <property type="match status" value="1"/>
</dbReference>
<dbReference type="FunFam" id="1.20.1250.20:FF:000002">
    <property type="entry name" value="Sugar transport protein 13"/>
    <property type="match status" value="1"/>
</dbReference>
<dbReference type="Gene3D" id="1.20.1250.20">
    <property type="entry name" value="MFS general substrate transporter like domains"/>
    <property type="match status" value="1"/>
</dbReference>
<dbReference type="InterPro" id="IPR020846">
    <property type="entry name" value="MFS_dom"/>
</dbReference>
<dbReference type="InterPro" id="IPR044778">
    <property type="entry name" value="MFS_STP/MST-like_plant"/>
</dbReference>
<dbReference type="InterPro" id="IPR005828">
    <property type="entry name" value="MFS_sugar_transport-like"/>
</dbReference>
<dbReference type="InterPro" id="IPR036259">
    <property type="entry name" value="MFS_trans_sf"/>
</dbReference>
<dbReference type="InterPro" id="IPR045262">
    <property type="entry name" value="STP/PLT_plant"/>
</dbReference>
<dbReference type="InterPro" id="IPR003663">
    <property type="entry name" value="Sugar/inositol_transpt"/>
</dbReference>
<dbReference type="InterPro" id="IPR005829">
    <property type="entry name" value="Sugar_transporter_CS"/>
</dbReference>
<dbReference type="NCBIfam" id="TIGR00879">
    <property type="entry name" value="SP"/>
    <property type="match status" value="1"/>
</dbReference>
<dbReference type="PANTHER" id="PTHR23500:SF357">
    <property type="entry name" value="IP12678P"/>
    <property type="match status" value="1"/>
</dbReference>
<dbReference type="PANTHER" id="PTHR23500">
    <property type="entry name" value="SOLUTE CARRIER FAMILY 2, FACILITATED GLUCOSE TRANSPORTER"/>
    <property type="match status" value="1"/>
</dbReference>
<dbReference type="Pfam" id="PF00083">
    <property type="entry name" value="Sugar_tr"/>
    <property type="match status" value="1"/>
</dbReference>
<dbReference type="PRINTS" id="PR00171">
    <property type="entry name" value="SUGRTRNSPORT"/>
</dbReference>
<dbReference type="SUPFAM" id="SSF103473">
    <property type="entry name" value="MFS general substrate transporter"/>
    <property type="match status" value="1"/>
</dbReference>
<dbReference type="PROSITE" id="PS50850">
    <property type="entry name" value="MFS"/>
    <property type="match status" value="1"/>
</dbReference>
<dbReference type="PROSITE" id="PS00216">
    <property type="entry name" value="SUGAR_TRANSPORT_1"/>
    <property type="match status" value="1"/>
</dbReference>
<dbReference type="PROSITE" id="PS00217">
    <property type="entry name" value="SUGAR_TRANSPORT_2"/>
    <property type="match status" value="1"/>
</dbReference>
<gene>
    <name type="primary">HUP1</name>
</gene>
<evidence type="ECO:0000255" key="1"/>
<evidence type="ECO:0000305" key="2"/>